<accession>Q5QNQ9</accession>
<accession>Q69Z83</accession>
<accession>Q80UA8</accession>
<organism>
    <name type="scientific">Mus musculus</name>
    <name type="common">Mouse</name>
    <dbReference type="NCBI Taxonomy" id="10090"/>
    <lineage>
        <taxon>Eukaryota</taxon>
        <taxon>Metazoa</taxon>
        <taxon>Chordata</taxon>
        <taxon>Craniata</taxon>
        <taxon>Vertebrata</taxon>
        <taxon>Euteleostomi</taxon>
        <taxon>Mammalia</taxon>
        <taxon>Eutheria</taxon>
        <taxon>Euarchontoglires</taxon>
        <taxon>Glires</taxon>
        <taxon>Rodentia</taxon>
        <taxon>Myomorpha</taxon>
        <taxon>Muroidea</taxon>
        <taxon>Muridae</taxon>
        <taxon>Murinae</taxon>
        <taxon>Mus</taxon>
        <taxon>Mus</taxon>
    </lineage>
</organism>
<sequence>MGTGFARGARGTAASGPGGGFLFAWILVSFTCHLASTQGAPEDVDVLQRLGLSWTKAGGGRSPTPPGVIPFPSGFIFTQRAKLQAPTANVLPTTLGRELALVLSLCSHRVNHAFLFAIRSRKHKLQLGLQFLPGRTIIHLGPRQSVAFDLDVHDGRWHHLALELRGRTVTMVTACGQHRVPVPLPSRRDSMLDPQGSFLLGKVNPRAVQFEGALCQFSIHPVAQVAHNYCAHLRERCRQVDTYSPQVGTLFPWDSGPAFALHPEPALLGLGNLTRTPATLGARPVSRALAVTLAPAMPTKPLRTVHPDVSEHSSSQTPLSPAKQSARKTPSPSSSASLANSTRVYRPAAAQPRQITTTSPTKRSPTKPSVSPLSVTPMKSPHATQKTGVPSFTKPVPPTQKPAPFTSYLAPSKASSPTVRPVQKTFMTPRPPVPSPQPLRPTTGLSKKFTNPTVAKSKSKTTSWASKPVLARSSVPKTLQQTVLSQSPVSYLGSQTLAPALPPLGVGNPRTMPPTRDSALTPAGSKKFTGRETSKKTRQKSSPRKPEPLSPGKSARDASPRDLTTKPSRPSTPALVLAPAYLLSSSPQPTSSSFPFFHLLGPTPFPMLMGPPGSKGDCGLPGPPGLPGLPGSPGARGPRGPPGPYGNPGPPGPPGAKGQKGDPGLSPGQAHDGAKGNMGLPGLSGNPGPLGRKGHKGHPGAAGHPGEQGQPGPEGSPGAKGYPGRQGFPGPVGDPGPKGSRGYIGLPGLFGLPGSDGERGLPGVPGKRGEMGRPGFPGDFGERGPPGLDGNPGEIGLPGPPGVLGLIGDTGALGPVGYPGPKGMKGLMGGVGEPGLKGDKGEQGVPGVSGDPGFQGDKGSHGLPGLPGGRGKPGPLGKAGDKGSLGFPGPPGPEGFPGDIGPPGDNGPEGMKGKPGARGLPGPPGQLGPEGDEGPMGPPGVPGLEGQPGRKGFPGRPGLDGSKGEPGDPGRPGPVGEQGLMGFIGLVGEPGIVGEKGDRGVMGPPGAPGPKGSMGHPGTPGGIGNPGEPGPWGPPGSRGLPGMRGAKGHRGPRGPDGPAGEQGSKGLKGRVGPRGRPGQPGQQGAAGERGHSGAKGFLGIPGPSGPPGAKGLPGEPGSQGPQGPVGPPGEMGPKGPPGAVGEPGLPGDSGMKGDLGPLGPPGEQGLIGQRGEPGLEGDHGPVGPDGLKGDRGDPGPDGEHGEKGQEGLKGEDGSPGPPGITGVPGREGKPGKQGEKGQRGAKGAKGHQGYLGEMGIPGEPGPPGTPGPKGSRGTLGPTGAPGRMGAQGEPGLAGYNGHKGITGPLGPPGPKGEKGDQGEDGKTEGPPGPPGDRGPVGDRGDRGEPGDPGYPGQEGVQGLRGEPGQQGQPGHPGPRGRPGPKGSKGEEGPKGKPGKAGPSGRRGTQGLQGLPGPRGVVGRQGPEGTAGSDGIPGRDGRPGYQGDQGNDGDPGPVGPAGRRGNPGVAGLPGAQGPPGFKGESGLPGQLGPPGKRGTEGGTGLPGNQGEPGSKGQPGDSGEMGFPGVAGLFGPKGPPGDIGFKGIQGPRGPPGLMGKEGIIGPPGMLGPSGLPGPKGDRGSRGDLGLQGPRGPPGPRGRPGPPGPPWHPIQFQQDDLGAAFQTWMDAQGAVRSEGYSYPDQLALDQGGEIFKTLHYLSNLIQSIKTPLGTKENPARVCRDLMDCEQRMADGTYWVDPNLGCSSDTIEVSCNFTQGGQTCLKPITASKAEFAVSRVQMNFLHLLSSEGTQHITIHCLNMTVWQEGPGRSSARQAVRFRAWNGQVFEAGGQFRPEVSMDGCKVHDGRWHQTLFTFRTQDPQQLPIVSVDNLPPVSSGKQYRLEVGPACFL</sequence>
<gene>
    <name type="primary">Col27a1</name>
    <name type="synonym">Kiaa1870</name>
</gene>
<name>CORA1_MOUSE</name>
<reference key="1">
    <citation type="journal article" date="2003" name="Matrix Biol.">
        <title>Identification, characterization and expression analysis of a new fibrillar collagen gene, COL27A1.</title>
        <authorList>
            <person name="Pace J.M."/>
            <person name="Corrado M."/>
            <person name="Missero C."/>
            <person name="Byers P.H."/>
        </authorList>
    </citation>
    <scope>NUCLEOTIDE SEQUENCE [MRNA]</scope>
    <scope>DEVELOPMENTAL STAGE</scope>
    <scope>TISSUE SPECIFICITY</scope>
    <source>
        <strain>C57BL/6J</strain>
    </source>
</reference>
<reference key="2">
    <citation type="journal article" date="2009" name="PLoS Biol.">
        <title>Lineage-specific biology revealed by a finished genome assembly of the mouse.</title>
        <authorList>
            <person name="Church D.M."/>
            <person name="Goodstadt L."/>
            <person name="Hillier L.W."/>
            <person name="Zody M.C."/>
            <person name="Goldstein S."/>
            <person name="She X."/>
            <person name="Bult C.J."/>
            <person name="Agarwala R."/>
            <person name="Cherry J.L."/>
            <person name="DiCuccio M."/>
            <person name="Hlavina W."/>
            <person name="Kapustin Y."/>
            <person name="Meric P."/>
            <person name="Maglott D."/>
            <person name="Birtle Z."/>
            <person name="Marques A.C."/>
            <person name="Graves T."/>
            <person name="Zhou S."/>
            <person name="Teague B."/>
            <person name="Potamousis K."/>
            <person name="Churas C."/>
            <person name="Place M."/>
            <person name="Herschleb J."/>
            <person name="Runnheim R."/>
            <person name="Forrest D."/>
            <person name="Amos-Landgraf J."/>
            <person name="Schwartz D.C."/>
            <person name="Cheng Z."/>
            <person name="Lindblad-Toh K."/>
            <person name="Eichler E.E."/>
            <person name="Ponting C.P."/>
        </authorList>
    </citation>
    <scope>NUCLEOTIDE SEQUENCE [LARGE SCALE GENOMIC DNA]</scope>
    <source>
        <strain>C57BL/6J</strain>
    </source>
</reference>
<reference key="3">
    <citation type="journal article" date="2004" name="DNA Res.">
        <title>Prediction of the coding sequences of mouse homologues of KIAA gene: IV. The complete nucleotide sequences of 500 mouse KIAA-homologous cDNAs identified by screening of terminal sequences of cDNA clones randomly sampled from size-fractionated libraries.</title>
        <authorList>
            <person name="Okazaki N."/>
            <person name="Kikuno R."/>
            <person name="Ohara R."/>
            <person name="Inamoto S."/>
            <person name="Koseki H."/>
            <person name="Hiraoka S."/>
            <person name="Saga Y."/>
            <person name="Seino S."/>
            <person name="Nishimura M."/>
            <person name="Kaisho T."/>
            <person name="Hoshino K."/>
            <person name="Kitamura H."/>
            <person name="Nagase T."/>
            <person name="Ohara O."/>
            <person name="Koga H."/>
        </authorList>
    </citation>
    <scope>NUCLEOTIDE SEQUENCE [LARGE SCALE MRNA] OF 989-1845</scope>
    <source>
        <tissue>Thymus</tissue>
    </source>
</reference>
<reference key="4">
    <citation type="journal article" date="2007" name="Bone">
        <title>Type XXVII collagen at the transition of cartilage to bone during skeletogenesis.</title>
        <authorList>
            <person name="Hjorten R."/>
            <person name="Hansen U."/>
            <person name="Underwood R.A."/>
            <person name="Telfer H.E."/>
            <person name="Fernandes R.J."/>
            <person name="Krakow D."/>
            <person name="Sebald E."/>
            <person name="Wachsmann-Hogiu S."/>
            <person name="Bruckner P."/>
            <person name="Jacquet R."/>
            <person name="Landis W.J."/>
            <person name="Byers P.H."/>
            <person name="Pace J.M."/>
        </authorList>
    </citation>
    <scope>SUBCELLULAR LOCATION</scope>
</reference>
<reference key="5">
    <citation type="journal article" date="2007" name="J. Biol. Chem.">
        <title>Collagen XXVII is developmentally regulated and forms thin fibrillar structures distinct from those of classical vertebrate fibrillar collagens.</title>
        <authorList>
            <person name="Plumb D.A."/>
            <person name="Dhir V."/>
            <person name="Mironov A."/>
            <person name="Ferrara L."/>
            <person name="Poulsom R."/>
            <person name="Kadler K.E."/>
            <person name="Thornton D.J."/>
            <person name="Briggs M.D."/>
            <person name="Boot-Handford R.P."/>
        </authorList>
    </citation>
    <scope>DEVELOPMENTAL STAGE</scope>
</reference>
<dbReference type="EMBL" id="AY167568">
    <property type="protein sequence ID" value="AAN87341.2"/>
    <property type="molecule type" value="mRNA"/>
</dbReference>
<dbReference type="EMBL" id="AL683828">
    <property type="status" value="NOT_ANNOTATED_CDS"/>
    <property type="molecule type" value="Genomic_DNA"/>
</dbReference>
<dbReference type="EMBL" id="AL691496">
    <property type="status" value="NOT_ANNOTATED_CDS"/>
    <property type="molecule type" value="Genomic_DNA"/>
</dbReference>
<dbReference type="EMBL" id="AK173283">
    <property type="protein sequence ID" value="BAD32561.1"/>
    <property type="molecule type" value="mRNA"/>
</dbReference>
<dbReference type="CCDS" id="CCDS18250.1"/>
<dbReference type="RefSeq" id="NP_079961.3">
    <property type="nucleotide sequence ID" value="NM_025685.3"/>
</dbReference>
<dbReference type="SMR" id="Q5QNQ9"/>
<dbReference type="BioGRID" id="237540">
    <property type="interactions" value="2"/>
</dbReference>
<dbReference type="ComplexPortal" id="CPX-3030">
    <property type="entry name" value="Collagen type XXVII trimer"/>
</dbReference>
<dbReference type="FunCoup" id="Q5QNQ9">
    <property type="interactions" value="165"/>
</dbReference>
<dbReference type="IntAct" id="Q5QNQ9">
    <property type="interactions" value="1"/>
</dbReference>
<dbReference type="STRING" id="10090.ENSMUSP00000043816"/>
<dbReference type="GlyCosmos" id="Q5QNQ9">
    <property type="glycosylation" value="3 sites, No reported glycans"/>
</dbReference>
<dbReference type="GlyGen" id="Q5QNQ9">
    <property type="glycosylation" value="7 sites"/>
</dbReference>
<dbReference type="iPTMnet" id="Q5QNQ9"/>
<dbReference type="PhosphoSitePlus" id="Q5QNQ9"/>
<dbReference type="PaxDb" id="10090-ENSMUSP00000043816"/>
<dbReference type="PeptideAtlas" id="Q5QNQ9"/>
<dbReference type="ProteomicsDB" id="285266"/>
<dbReference type="Antibodypedia" id="65300">
    <property type="antibodies" value="28 antibodies from 14 providers"/>
</dbReference>
<dbReference type="DNASU" id="373864"/>
<dbReference type="Ensembl" id="ENSMUST00000036300.13">
    <property type="protein sequence ID" value="ENSMUSP00000043816.7"/>
    <property type="gene ID" value="ENSMUSG00000045672.16"/>
</dbReference>
<dbReference type="GeneID" id="373864"/>
<dbReference type="KEGG" id="mmu:373864"/>
<dbReference type="UCSC" id="uc008tfs.1">
    <property type="organism name" value="mouse"/>
</dbReference>
<dbReference type="AGR" id="MGI:2672118"/>
<dbReference type="CTD" id="85301"/>
<dbReference type="MGI" id="MGI:2672118">
    <property type="gene designation" value="Col27a1"/>
</dbReference>
<dbReference type="VEuPathDB" id="HostDB:ENSMUSG00000045672"/>
<dbReference type="eggNOG" id="KOG3544">
    <property type="taxonomic scope" value="Eukaryota"/>
</dbReference>
<dbReference type="GeneTree" id="ENSGT00940000163466"/>
<dbReference type="HOGENOM" id="CLU_001074_19_1_1"/>
<dbReference type="InParanoid" id="Q5QNQ9"/>
<dbReference type="OMA" id="CNFTQGG"/>
<dbReference type="PhylomeDB" id="Q5QNQ9"/>
<dbReference type="TreeFam" id="TF344135"/>
<dbReference type="BioGRID-ORCS" id="373864">
    <property type="hits" value="1 hit in 79 CRISPR screens"/>
</dbReference>
<dbReference type="ChiTaRS" id="Col27a1">
    <property type="organism name" value="mouse"/>
</dbReference>
<dbReference type="PRO" id="PR:Q5QNQ9"/>
<dbReference type="Proteomes" id="UP000000589">
    <property type="component" value="Chromosome 4"/>
</dbReference>
<dbReference type="RNAct" id="Q5QNQ9">
    <property type="molecule type" value="protein"/>
</dbReference>
<dbReference type="Bgee" id="ENSMUSG00000045672">
    <property type="expression patterns" value="Expressed in humerus cartilage element and 226 other cell types or tissues"/>
</dbReference>
<dbReference type="ExpressionAtlas" id="Q5QNQ9">
    <property type="expression patterns" value="baseline and differential"/>
</dbReference>
<dbReference type="GO" id="GO:0062023">
    <property type="term" value="C:collagen-containing extracellular matrix"/>
    <property type="evidence" value="ECO:0007005"/>
    <property type="project" value="BHF-UCL"/>
</dbReference>
<dbReference type="GO" id="GO:0005576">
    <property type="term" value="C:extracellular region"/>
    <property type="evidence" value="ECO:0007669"/>
    <property type="project" value="UniProtKB-KW"/>
</dbReference>
<dbReference type="GO" id="GO:0005583">
    <property type="term" value="C:fibrillar collagen trimer"/>
    <property type="evidence" value="ECO:0000314"/>
    <property type="project" value="MGI"/>
</dbReference>
<dbReference type="GO" id="GO:0005201">
    <property type="term" value="F:extracellular matrix structural constituent"/>
    <property type="evidence" value="ECO:0000314"/>
    <property type="project" value="MGI"/>
</dbReference>
<dbReference type="GO" id="GO:0046872">
    <property type="term" value="F:metal ion binding"/>
    <property type="evidence" value="ECO:0007669"/>
    <property type="project" value="UniProtKB-KW"/>
</dbReference>
<dbReference type="GO" id="GO:0030198">
    <property type="term" value="P:extracellular matrix organization"/>
    <property type="evidence" value="ECO:0000315"/>
    <property type="project" value="MGI"/>
</dbReference>
<dbReference type="GO" id="GO:0003431">
    <property type="term" value="P:growth plate cartilage chondrocyte development"/>
    <property type="evidence" value="ECO:0000315"/>
    <property type="project" value="MGI"/>
</dbReference>
<dbReference type="FunFam" id="2.60.120.1000:FF:000011">
    <property type="entry name" value="Collagen alpha-1(XXVII) chain"/>
    <property type="match status" value="1"/>
</dbReference>
<dbReference type="FunFam" id="2.60.120.200:FF:000085">
    <property type="entry name" value="collagen alpha-1(XXVII) chain isoform X1"/>
    <property type="match status" value="1"/>
</dbReference>
<dbReference type="Gene3D" id="2.60.120.1000">
    <property type="match status" value="1"/>
</dbReference>
<dbReference type="Gene3D" id="2.60.120.200">
    <property type="match status" value="1"/>
</dbReference>
<dbReference type="InterPro" id="IPR008160">
    <property type="entry name" value="Collagen"/>
</dbReference>
<dbReference type="InterPro" id="IPR050938">
    <property type="entry name" value="Collagen_Structural_Proteins"/>
</dbReference>
<dbReference type="InterPro" id="IPR013320">
    <property type="entry name" value="ConA-like_dom_sf"/>
</dbReference>
<dbReference type="InterPro" id="IPR000885">
    <property type="entry name" value="Fib_collagen_C"/>
</dbReference>
<dbReference type="InterPro" id="IPR048287">
    <property type="entry name" value="TSPN-like_N"/>
</dbReference>
<dbReference type="PANTHER" id="PTHR37456:SF6">
    <property type="entry name" value="COLLAGEN ALPHA-1(XXIII) CHAIN-LIKE ISOFORM X2"/>
    <property type="match status" value="1"/>
</dbReference>
<dbReference type="PANTHER" id="PTHR37456">
    <property type="entry name" value="SI:CH211-266K2.1"/>
    <property type="match status" value="1"/>
</dbReference>
<dbReference type="Pfam" id="PF01410">
    <property type="entry name" value="COLFI"/>
    <property type="match status" value="2"/>
</dbReference>
<dbReference type="Pfam" id="PF01391">
    <property type="entry name" value="Collagen"/>
    <property type="match status" value="7"/>
</dbReference>
<dbReference type="SMART" id="SM00038">
    <property type="entry name" value="COLFI"/>
    <property type="match status" value="1"/>
</dbReference>
<dbReference type="SMART" id="SM00210">
    <property type="entry name" value="TSPN"/>
    <property type="match status" value="1"/>
</dbReference>
<dbReference type="SUPFAM" id="SSF49899">
    <property type="entry name" value="Concanavalin A-like lectins/glucanases"/>
    <property type="match status" value="1"/>
</dbReference>
<dbReference type="PROSITE" id="PS51461">
    <property type="entry name" value="NC1_FIB"/>
    <property type="match status" value="1"/>
</dbReference>
<keyword id="KW-0106">Calcium</keyword>
<keyword id="KW-0176">Collagen</keyword>
<keyword id="KW-1015">Disulfide bond</keyword>
<keyword id="KW-0272">Extracellular matrix</keyword>
<keyword id="KW-0325">Glycoprotein</keyword>
<keyword id="KW-0479">Metal-binding</keyword>
<keyword id="KW-1185">Reference proteome</keyword>
<keyword id="KW-0677">Repeat</keyword>
<keyword id="KW-0964">Secreted</keyword>
<keyword id="KW-0732">Signal</keyword>
<protein>
    <recommendedName>
        <fullName>Collagen alpha-1(XXVII) chain</fullName>
    </recommendedName>
</protein>
<proteinExistence type="evidence at transcript level"/>
<evidence type="ECO:0000250" key="1"/>
<evidence type="ECO:0000255" key="2"/>
<evidence type="ECO:0000255" key="3">
    <source>
        <dbReference type="PROSITE-ProRule" id="PRU00793"/>
    </source>
</evidence>
<evidence type="ECO:0000256" key="4">
    <source>
        <dbReference type="SAM" id="MobiDB-lite"/>
    </source>
</evidence>
<evidence type="ECO:0000269" key="5">
    <source>
    </source>
</evidence>
<evidence type="ECO:0000269" key="6">
    <source>
    </source>
</evidence>
<evidence type="ECO:0000269" key="7">
    <source>
    </source>
</evidence>
<evidence type="ECO:0000305" key="8"/>
<feature type="signal peptide" evidence="2">
    <location>
        <begin position="1"/>
        <end position="39"/>
    </location>
</feature>
<feature type="propeptide" id="PRO_0000314669" description="N-terminal propeptide">
    <location>
        <begin position="40"/>
        <end position="609"/>
    </location>
</feature>
<feature type="chain" id="PRO_0000314670" description="Collagen alpha-1(XXVII) chain">
    <location>
        <begin position="610"/>
        <end position="1606"/>
    </location>
</feature>
<feature type="propeptide" id="PRO_0000314671" description="C-terminal propeptide">
    <location>
        <begin position="1607"/>
        <end position="1845"/>
    </location>
</feature>
<feature type="domain" description="Laminin G-like">
    <location>
        <begin position="72"/>
        <end position="237"/>
    </location>
</feature>
<feature type="domain" description="Collagen-like 1">
    <location>
        <begin position="610"/>
        <end position="664"/>
    </location>
</feature>
<feature type="domain" description="Collagen-like 2">
    <location>
        <begin position="673"/>
        <end position="732"/>
    </location>
</feature>
<feature type="domain" description="Collagen-like 3">
    <location>
        <begin position="742"/>
        <end position="801"/>
    </location>
</feature>
<feature type="domain" description="Collagen-like 4">
    <location>
        <begin position="817"/>
        <end position="876"/>
    </location>
</feature>
<feature type="domain" description="Collagen-like 5">
    <location>
        <begin position="877"/>
        <end position="936"/>
    </location>
</feature>
<feature type="domain" description="Collagen-like 6">
    <location>
        <begin position="937"/>
        <end position="996"/>
    </location>
</feature>
<feature type="domain" description="Collagen-like 7">
    <location>
        <begin position="997"/>
        <end position="1038"/>
    </location>
</feature>
<feature type="domain" description="Collagen-like 8">
    <location>
        <begin position="1039"/>
        <end position="1096"/>
    </location>
</feature>
<feature type="domain" description="Collagen-like 9">
    <location>
        <begin position="1117"/>
        <end position="1176"/>
    </location>
</feature>
<feature type="domain" description="Collagen-like 10">
    <location>
        <begin position="1177"/>
        <end position="1236"/>
    </location>
</feature>
<feature type="domain" description="Collagen-like 11">
    <location>
        <begin position="1240"/>
        <end position="1299"/>
    </location>
</feature>
<feature type="domain" description="Collagen-like 12">
    <location>
        <begin position="1325"/>
        <end position="1384"/>
    </location>
</feature>
<feature type="domain" description="Collagen-like 13">
    <location>
        <begin position="1424"/>
        <end position="1483"/>
    </location>
</feature>
<feature type="domain" description="Collagen-like 14">
    <location>
        <begin position="1484"/>
        <end position="1543"/>
    </location>
</feature>
<feature type="domain" description="Collagen-like 15">
    <location>
        <begin position="1544"/>
        <end position="1603"/>
    </location>
</feature>
<feature type="domain" description="Fibrillar collagen NC1" evidence="3">
    <location>
        <begin position="1645"/>
        <end position="1845"/>
    </location>
</feature>
<feature type="region of interest" description="Disordered" evidence="4">
    <location>
        <begin position="299"/>
        <end position="478"/>
    </location>
</feature>
<feature type="region of interest" description="Disordered" evidence="4">
    <location>
        <begin position="502"/>
        <end position="572"/>
    </location>
</feature>
<feature type="region of interest" description="Disordered" evidence="4">
    <location>
        <begin position="608"/>
        <end position="774"/>
    </location>
</feature>
<feature type="region of interest" description="Triple-helical">
    <location>
        <begin position="610"/>
        <end position="1603"/>
    </location>
</feature>
<feature type="region of interest" description="Disordered" evidence="4">
    <location>
        <begin position="827"/>
        <end position="1608"/>
    </location>
</feature>
<feature type="compositionally biased region" description="Polar residues" evidence="4">
    <location>
        <begin position="312"/>
        <end position="323"/>
    </location>
</feature>
<feature type="compositionally biased region" description="Low complexity" evidence="4">
    <location>
        <begin position="327"/>
        <end position="343"/>
    </location>
</feature>
<feature type="compositionally biased region" description="Low complexity" evidence="4">
    <location>
        <begin position="356"/>
        <end position="372"/>
    </location>
</feature>
<feature type="compositionally biased region" description="Pro residues" evidence="4">
    <location>
        <begin position="429"/>
        <end position="439"/>
    </location>
</feature>
<feature type="compositionally biased region" description="Polar residues" evidence="4">
    <location>
        <begin position="444"/>
        <end position="454"/>
    </location>
</feature>
<feature type="compositionally biased region" description="Basic and acidic residues" evidence="4">
    <location>
        <begin position="554"/>
        <end position="564"/>
    </location>
</feature>
<feature type="compositionally biased region" description="Pro residues" evidence="4">
    <location>
        <begin position="639"/>
        <end position="654"/>
    </location>
</feature>
<feature type="compositionally biased region" description="Low complexity" evidence="4">
    <location>
        <begin position="677"/>
        <end position="690"/>
    </location>
</feature>
<feature type="compositionally biased region" description="Low complexity" evidence="4">
    <location>
        <begin position="699"/>
        <end position="719"/>
    </location>
</feature>
<feature type="compositionally biased region" description="Gly residues" evidence="4">
    <location>
        <begin position="865"/>
        <end position="874"/>
    </location>
</feature>
<feature type="compositionally biased region" description="Low complexity" evidence="4">
    <location>
        <begin position="896"/>
        <end position="909"/>
    </location>
</feature>
<feature type="compositionally biased region" description="Gly residues" evidence="4">
    <location>
        <begin position="1018"/>
        <end position="1027"/>
    </location>
</feature>
<feature type="compositionally biased region" description="Low complexity" evidence="4">
    <location>
        <begin position="1074"/>
        <end position="1086"/>
    </location>
</feature>
<feature type="compositionally biased region" description="Low complexity" evidence="4">
    <location>
        <begin position="1112"/>
        <end position="1122"/>
    </location>
</feature>
<feature type="compositionally biased region" description="Low complexity" evidence="4">
    <location>
        <begin position="1152"/>
        <end position="1167"/>
    </location>
</feature>
<feature type="compositionally biased region" description="Basic and acidic residues" evidence="4">
    <location>
        <begin position="1187"/>
        <end position="1212"/>
    </location>
</feature>
<feature type="compositionally biased region" description="Basic and acidic residues" evidence="4">
    <location>
        <begin position="1226"/>
        <end position="1238"/>
    </location>
</feature>
<feature type="compositionally biased region" description="Basic and acidic residues" evidence="4">
    <location>
        <begin position="1311"/>
        <end position="1323"/>
    </location>
</feature>
<feature type="compositionally biased region" description="Basic and acidic residues" evidence="4">
    <location>
        <begin position="1335"/>
        <end position="1345"/>
    </location>
</feature>
<feature type="compositionally biased region" description="Low complexity" evidence="4">
    <location>
        <begin position="1360"/>
        <end position="1369"/>
    </location>
</feature>
<feature type="compositionally biased region" description="Low complexity" evidence="4">
    <location>
        <begin position="1395"/>
        <end position="1422"/>
    </location>
</feature>
<feature type="compositionally biased region" description="Low complexity" evidence="4">
    <location>
        <begin position="1438"/>
        <end position="1465"/>
    </location>
</feature>
<feature type="compositionally biased region" description="Low complexity" evidence="4">
    <location>
        <begin position="1557"/>
        <end position="1572"/>
    </location>
</feature>
<feature type="compositionally biased region" description="Pro residues" evidence="4">
    <location>
        <begin position="1588"/>
        <end position="1605"/>
    </location>
</feature>
<feature type="binding site" evidence="1">
    <location>
        <position position="1693"/>
    </location>
    <ligand>
        <name>Ca(2+)</name>
        <dbReference type="ChEBI" id="CHEBI:29108"/>
    </ligand>
</feature>
<feature type="binding site" evidence="1">
    <location>
        <position position="1695"/>
    </location>
    <ligand>
        <name>Ca(2+)</name>
        <dbReference type="ChEBI" id="CHEBI:29108"/>
    </ligand>
</feature>
<feature type="binding site" evidence="1">
    <location>
        <position position="1698"/>
    </location>
    <ligand>
        <name>Ca(2+)</name>
        <dbReference type="ChEBI" id="CHEBI:29108"/>
    </ligand>
</feature>
<feature type="binding site" evidence="1">
    <location>
        <position position="1701"/>
    </location>
    <ligand>
        <name>Ca(2+)</name>
        <dbReference type="ChEBI" id="CHEBI:29108"/>
    </ligand>
</feature>
<feature type="glycosylation site" description="N-linked (GlcNAc...) asparagine" evidence="2">
    <location>
        <position position="272"/>
    </location>
</feature>
<feature type="glycosylation site" description="N-linked (GlcNAc...) asparagine" evidence="2">
    <location>
        <position position="340"/>
    </location>
</feature>
<feature type="glycosylation site" description="N-linked (GlcNAc...) asparagine" evidence="2">
    <location>
        <position position="1754"/>
    </location>
</feature>
<feature type="disulfide bond" evidence="3">
    <location>
        <begin position="1675"/>
        <end position="1707"/>
    </location>
</feature>
<feature type="disulfide bond" description="Interchain (with C-1285)" evidence="3">
    <location>
        <position position="1681"/>
    </location>
</feature>
<feature type="disulfide bond" description="Interchain (with C-1268)" evidence="3">
    <location>
        <position position="1698"/>
    </location>
</feature>
<feature type="disulfide bond" evidence="3">
    <location>
        <begin position="1716"/>
        <end position="1843"/>
    </location>
</feature>
<feature type="disulfide bond" evidence="3">
    <location>
        <begin position="1752"/>
        <end position="1796"/>
    </location>
</feature>
<feature type="sequence conflict" description="In Ref. 1; AAN87341." evidence="8" ref="1">
    <original>LAP</original>
    <variation>VAR</variation>
    <location>
        <begin position="293"/>
        <end position="295"/>
    </location>
</feature>
<feature type="sequence conflict" description="In Ref. 1; AAN87341." evidence="8" ref="1">
    <original>LRTVH</original>
    <variation>VRSVR</variation>
    <location>
        <begin position="302"/>
        <end position="306"/>
    </location>
</feature>
<feature type="sequence conflict" description="In Ref. 1; AAN87341." evidence="8" ref="1">
    <original>HSS</original>
    <variation>RSC</variation>
    <location>
        <begin position="312"/>
        <end position="314"/>
    </location>
</feature>
<comment type="function">
    <text evidence="1">Plays a role during the calcification of cartilage and the transition of cartilage to bone.</text>
</comment>
<comment type="subcellular location">
    <subcellularLocation>
        <location evidence="3 7">Secreted</location>
        <location evidence="3 7">Extracellular space</location>
        <location evidence="3 7">Extracellular matrix</location>
    </subcellularLocation>
    <text>Found on some small banded collagen fibrils and filamentous meshworks.</text>
</comment>
<comment type="tissue specificity">
    <text evidence="5">Highly expressed in cartilage, eye and ear.</text>
</comment>
<comment type="developmental stage">
    <text evidence="5 6">Expressed in 14.5 dpc in several cartilaginous structures including anlagen of several bones and the developing lungs as well as in the eye, ear and colon. First detectable at 12.5 dpc. At 14.5 dpc localizes to cartilage, developing dermis, cornea, the inner limiting membrane of the retina, and major arteries of the heart. At 18.5 dpc appears restricted mainly to cartilage where expression continued into adulthood.</text>
</comment>
<comment type="domain">
    <text evidence="1">The C-terminal propeptide, also known as COLFI domain, have crucial roles in tissue growth and repair by controlling both the intracellular assembly of procollagen molecules and the extracellular assembly of collagen fibrils. It binds a calcium ion which is essential for its function (By similarity).</text>
</comment>
<comment type="similarity">
    <text evidence="3">Belongs to the fibrillar collagen family.</text>
</comment>